<keyword id="KW-0687">Ribonucleoprotein</keyword>
<keyword id="KW-0689">Ribosomal protein</keyword>
<keyword id="KW-0694">RNA-binding</keyword>
<keyword id="KW-0699">rRNA-binding</keyword>
<proteinExistence type="inferred from homology"/>
<evidence type="ECO:0000255" key="1">
    <source>
        <dbReference type="HAMAP-Rule" id="MF_00500"/>
    </source>
</evidence>
<evidence type="ECO:0000305" key="2"/>
<gene>
    <name evidence="1" type="primary">rpsT</name>
    <name type="ordered locus">SH1331</name>
</gene>
<name>RS20_STAHJ</name>
<reference key="1">
    <citation type="journal article" date="2005" name="J. Bacteriol.">
        <title>Whole-genome sequencing of Staphylococcus haemolyticus uncovers the extreme plasticity of its genome and the evolution of human-colonizing staphylococcal species.</title>
        <authorList>
            <person name="Takeuchi F."/>
            <person name="Watanabe S."/>
            <person name="Baba T."/>
            <person name="Yuzawa H."/>
            <person name="Ito T."/>
            <person name="Morimoto Y."/>
            <person name="Kuroda M."/>
            <person name="Cui L."/>
            <person name="Takahashi M."/>
            <person name="Ankai A."/>
            <person name="Baba S."/>
            <person name="Fukui S."/>
            <person name="Lee J.C."/>
            <person name="Hiramatsu K."/>
        </authorList>
    </citation>
    <scope>NUCLEOTIDE SEQUENCE [LARGE SCALE GENOMIC DNA]</scope>
    <source>
        <strain>JCSC1435</strain>
    </source>
</reference>
<sequence>MPNIKSAIKRVRTTENAEARNISQKNAMRTAVKNAKTAINNNADNKAELVNFAIKSVDKASQSNLIHSNKADRIKSQLMSSSK</sequence>
<comment type="function">
    <text evidence="1">Binds directly to 16S ribosomal RNA.</text>
</comment>
<comment type="similarity">
    <text evidence="1">Belongs to the bacterial ribosomal protein bS20 family.</text>
</comment>
<dbReference type="EMBL" id="AP006716">
    <property type="protein sequence ID" value="BAE04640.1"/>
    <property type="molecule type" value="Genomic_DNA"/>
</dbReference>
<dbReference type="RefSeq" id="WP_011275628.1">
    <property type="nucleotide sequence ID" value="NC_007168.1"/>
</dbReference>
<dbReference type="SMR" id="Q4L6T5"/>
<dbReference type="GeneID" id="93780731"/>
<dbReference type="KEGG" id="sha:SH1331"/>
<dbReference type="eggNOG" id="COG0268">
    <property type="taxonomic scope" value="Bacteria"/>
</dbReference>
<dbReference type="HOGENOM" id="CLU_160655_1_1_9"/>
<dbReference type="OrthoDB" id="9808392at2"/>
<dbReference type="Proteomes" id="UP000000543">
    <property type="component" value="Chromosome"/>
</dbReference>
<dbReference type="GO" id="GO:0005829">
    <property type="term" value="C:cytosol"/>
    <property type="evidence" value="ECO:0007669"/>
    <property type="project" value="TreeGrafter"/>
</dbReference>
<dbReference type="GO" id="GO:0015935">
    <property type="term" value="C:small ribosomal subunit"/>
    <property type="evidence" value="ECO:0007669"/>
    <property type="project" value="TreeGrafter"/>
</dbReference>
<dbReference type="GO" id="GO:0070181">
    <property type="term" value="F:small ribosomal subunit rRNA binding"/>
    <property type="evidence" value="ECO:0007669"/>
    <property type="project" value="TreeGrafter"/>
</dbReference>
<dbReference type="GO" id="GO:0003735">
    <property type="term" value="F:structural constituent of ribosome"/>
    <property type="evidence" value="ECO:0007669"/>
    <property type="project" value="InterPro"/>
</dbReference>
<dbReference type="GO" id="GO:0006412">
    <property type="term" value="P:translation"/>
    <property type="evidence" value="ECO:0007669"/>
    <property type="project" value="UniProtKB-UniRule"/>
</dbReference>
<dbReference type="Gene3D" id="1.20.58.110">
    <property type="entry name" value="Ribosomal protein S20"/>
    <property type="match status" value="1"/>
</dbReference>
<dbReference type="HAMAP" id="MF_00500">
    <property type="entry name" value="Ribosomal_bS20"/>
    <property type="match status" value="1"/>
</dbReference>
<dbReference type="InterPro" id="IPR002583">
    <property type="entry name" value="Ribosomal_bS20"/>
</dbReference>
<dbReference type="InterPro" id="IPR036510">
    <property type="entry name" value="Ribosomal_bS20_sf"/>
</dbReference>
<dbReference type="NCBIfam" id="TIGR00029">
    <property type="entry name" value="S20"/>
    <property type="match status" value="1"/>
</dbReference>
<dbReference type="PANTHER" id="PTHR33398">
    <property type="entry name" value="30S RIBOSOMAL PROTEIN S20"/>
    <property type="match status" value="1"/>
</dbReference>
<dbReference type="PANTHER" id="PTHR33398:SF1">
    <property type="entry name" value="SMALL RIBOSOMAL SUBUNIT PROTEIN BS20C"/>
    <property type="match status" value="1"/>
</dbReference>
<dbReference type="Pfam" id="PF01649">
    <property type="entry name" value="Ribosomal_S20p"/>
    <property type="match status" value="1"/>
</dbReference>
<dbReference type="SUPFAM" id="SSF46992">
    <property type="entry name" value="Ribosomal protein S20"/>
    <property type="match status" value="1"/>
</dbReference>
<accession>Q4L6T5</accession>
<organism>
    <name type="scientific">Staphylococcus haemolyticus (strain JCSC1435)</name>
    <dbReference type="NCBI Taxonomy" id="279808"/>
    <lineage>
        <taxon>Bacteria</taxon>
        <taxon>Bacillati</taxon>
        <taxon>Bacillota</taxon>
        <taxon>Bacilli</taxon>
        <taxon>Bacillales</taxon>
        <taxon>Staphylococcaceae</taxon>
        <taxon>Staphylococcus</taxon>
    </lineage>
</organism>
<feature type="chain" id="PRO_0000224954" description="Small ribosomal subunit protein bS20">
    <location>
        <begin position="1"/>
        <end position="83"/>
    </location>
</feature>
<protein>
    <recommendedName>
        <fullName evidence="1">Small ribosomal subunit protein bS20</fullName>
    </recommendedName>
    <alternativeName>
        <fullName evidence="2">30S ribosomal protein S20</fullName>
    </alternativeName>
</protein>